<evidence type="ECO:0000255" key="1">
    <source>
        <dbReference type="HAMAP-Rule" id="MF_00006"/>
    </source>
</evidence>
<organism>
    <name type="scientific">Shewanella amazonensis (strain ATCC BAA-1098 / SB2B)</name>
    <dbReference type="NCBI Taxonomy" id="326297"/>
    <lineage>
        <taxon>Bacteria</taxon>
        <taxon>Pseudomonadati</taxon>
        <taxon>Pseudomonadota</taxon>
        <taxon>Gammaproteobacteria</taxon>
        <taxon>Alteromonadales</taxon>
        <taxon>Shewanellaceae</taxon>
        <taxon>Shewanella</taxon>
    </lineage>
</organism>
<keyword id="KW-0028">Amino-acid biosynthesis</keyword>
<keyword id="KW-0055">Arginine biosynthesis</keyword>
<keyword id="KW-0963">Cytoplasm</keyword>
<keyword id="KW-0456">Lyase</keyword>
<keyword id="KW-1185">Reference proteome</keyword>
<comment type="catalytic activity">
    <reaction evidence="1">
        <text>2-(N(omega)-L-arginino)succinate = fumarate + L-arginine</text>
        <dbReference type="Rhea" id="RHEA:24020"/>
        <dbReference type="ChEBI" id="CHEBI:29806"/>
        <dbReference type="ChEBI" id="CHEBI:32682"/>
        <dbReference type="ChEBI" id="CHEBI:57472"/>
        <dbReference type="EC" id="4.3.2.1"/>
    </reaction>
</comment>
<comment type="pathway">
    <text evidence="1">Amino-acid biosynthesis; L-arginine biosynthesis; L-arginine from L-ornithine and carbamoyl phosphate: step 3/3.</text>
</comment>
<comment type="subcellular location">
    <subcellularLocation>
        <location evidence="1">Cytoplasm</location>
    </subcellularLocation>
</comment>
<comment type="similarity">
    <text evidence="1">Belongs to the lyase 1 family. Argininosuccinate lyase subfamily.</text>
</comment>
<proteinExistence type="inferred from homology"/>
<accession>A1S265</accession>
<reference key="1">
    <citation type="submission" date="2006-12" db="EMBL/GenBank/DDBJ databases">
        <title>Complete sequence of Shewanella amazonensis SB2B.</title>
        <authorList>
            <consortium name="US DOE Joint Genome Institute"/>
            <person name="Copeland A."/>
            <person name="Lucas S."/>
            <person name="Lapidus A."/>
            <person name="Barry K."/>
            <person name="Detter J.C."/>
            <person name="Glavina del Rio T."/>
            <person name="Hammon N."/>
            <person name="Israni S."/>
            <person name="Dalin E."/>
            <person name="Tice H."/>
            <person name="Pitluck S."/>
            <person name="Munk A.C."/>
            <person name="Brettin T."/>
            <person name="Bruce D."/>
            <person name="Han C."/>
            <person name="Tapia R."/>
            <person name="Gilna P."/>
            <person name="Schmutz J."/>
            <person name="Larimer F."/>
            <person name="Land M."/>
            <person name="Hauser L."/>
            <person name="Kyrpides N."/>
            <person name="Mikhailova N."/>
            <person name="Fredrickson J."/>
            <person name="Richardson P."/>
        </authorList>
    </citation>
    <scope>NUCLEOTIDE SEQUENCE [LARGE SCALE GENOMIC DNA]</scope>
    <source>
        <strain>ATCC BAA-1098 / SB2B</strain>
    </source>
</reference>
<name>ARLY_SHEAM</name>
<gene>
    <name evidence="1" type="primary">argH</name>
    <name type="ordered locus">Sama_0260</name>
</gene>
<dbReference type="EC" id="4.3.2.1" evidence="1"/>
<dbReference type="EMBL" id="CP000507">
    <property type="protein sequence ID" value="ABL98471.1"/>
    <property type="molecule type" value="Genomic_DNA"/>
</dbReference>
<dbReference type="RefSeq" id="WP_011758381.1">
    <property type="nucleotide sequence ID" value="NC_008700.1"/>
</dbReference>
<dbReference type="SMR" id="A1S265"/>
<dbReference type="STRING" id="326297.Sama_0260"/>
<dbReference type="KEGG" id="saz:Sama_0260"/>
<dbReference type="eggNOG" id="COG0165">
    <property type="taxonomic scope" value="Bacteria"/>
</dbReference>
<dbReference type="HOGENOM" id="CLU_027272_2_3_6"/>
<dbReference type="OrthoDB" id="9769623at2"/>
<dbReference type="UniPathway" id="UPA00068">
    <property type="reaction ID" value="UER00114"/>
</dbReference>
<dbReference type="Proteomes" id="UP000009175">
    <property type="component" value="Chromosome"/>
</dbReference>
<dbReference type="GO" id="GO:0005829">
    <property type="term" value="C:cytosol"/>
    <property type="evidence" value="ECO:0007669"/>
    <property type="project" value="TreeGrafter"/>
</dbReference>
<dbReference type="GO" id="GO:0004056">
    <property type="term" value="F:argininosuccinate lyase activity"/>
    <property type="evidence" value="ECO:0007669"/>
    <property type="project" value="UniProtKB-UniRule"/>
</dbReference>
<dbReference type="GO" id="GO:0042450">
    <property type="term" value="P:arginine biosynthetic process via ornithine"/>
    <property type="evidence" value="ECO:0007669"/>
    <property type="project" value="InterPro"/>
</dbReference>
<dbReference type="GO" id="GO:0006526">
    <property type="term" value="P:L-arginine biosynthetic process"/>
    <property type="evidence" value="ECO:0007669"/>
    <property type="project" value="UniProtKB-UniRule"/>
</dbReference>
<dbReference type="CDD" id="cd01359">
    <property type="entry name" value="Argininosuccinate_lyase"/>
    <property type="match status" value="1"/>
</dbReference>
<dbReference type="FunFam" id="1.10.40.30:FF:000001">
    <property type="entry name" value="Argininosuccinate lyase"/>
    <property type="match status" value="1"/>
</dbReference>
<dbReference type="FunFam" id="1.20.200.10:FF:000006">
    <property type="entry name" value="Argininosuccinate lyase"/>
    <property type="match status" value="1"/>
</dbReference>
<dbReference type="Gene3D" id="1.10.40.30">
    <property type="entry name" value="Fumarase/aspartase (C-terminal domain)"/>
    <property type="match status" value="1"/>
</dbReference>
<dbReference type="Gene3D" id="1.20.200.10">
    <property type="entry name" value="Fumarase/aspartase (Central domain)"/>
    <property type="match status" value="1"/>
</dbReference>
<dbReference type="Gene3D" id="1.10.275.10">
    <property type="entry name" value="Fumarase/aspartase (N-terminal domain)"/>
    <property type="match status" value="1"/>
</dbReference>
<dbReference type="HAMAP" id="MF_00006">
    <property type="entry name" value="Arg_succ_lyase"/>
    <property type="match status" value="1"/>
</dbReference>
<dbReference type="InterPro" id="IPR029419">
    <property type="entry name" value="Arg_succ_lyase_C"/>
</dbReference>
<dbReference type="InterPro" id="IPR009049">
    <property type="entry name" value="Argininosuccinate_lyase"/>
</dbReference>
<dbReference type="InterPro" id="IPR024083">
    <property type="entry name" value="Fumarase/histidase_N"/>
</dbReference>
<dbReference type="InterPro" id="IPR020557">
    <property type="entry name" value="Fumarate_lyase_CS"/>
</dbReference>
<dbReference type="InterPro" id="IPR000362">
    <property type="entry name" value="Fumarate_lyase_fam"/>
</dbReference>
<dbReference type="InterPro" id="IPR022761">
    <property type="entry name" value="Fumarate_lyase_N"/>
</dbReference>
<dbReference type="InterPro" id="IPR008948">
    <property type="entry name" value="L-Aspartase-like"/>
</dbReference>
<dbReference type="NCBIfam" id="TIGR00838">
    <property type="entry name" value="argH"/>
    <property type="match status" value="1"/>
</dbReference>
<dbReference type="NCBIfam" id="NF008964">
    <property type="entry name" value="PRK12308.1"/>
    <property type="match status" value="1"/>
</dbReference>
<dbReference type="PANTHER" id="PTHR43814">
    <property type="entry name" value="ARGININOSUCCINATE LYASE"/>
    <property type="match status" value="1"/>
</dbReference>
<dbReference type="PANTHER" id="PTHR43814:SF1">
    <property type="entry name" value="ARGININOSUCCINATE LYASE"/>
    <property type="match status" value="1"/>
</dbReference>
<dbReference type="Pfam" id="PF14698">
    <property type="entry name" value="ASL_C2"/>
    <property type="match status" value="1"/>
</dbReference>
<dbReference type="Pfam" id="PF00206">
    <property type="entry name" value="Lyase_1"/>
    <property type="match status" value="1"/>
</dbReference>
<dbReference type="PRINTS" id="PR00145">
    <property type="entry name" value="ARGSUCLYASE"/>
</dbReference>
<dbReference type="PRINTS" id="PR00149">
    <property type="entry name" value="FUMRATELYASE"/>
</dbReference>
<dbReference type="SUPFAM" id="SSF48557">
    <property type="entry name" value="L-aspartase-like"/>
    <property type="match status" value="1"/>
</dbReference>
<dbReference type="PROSITE" id="PS00163">
    <property type="entry name" value="FUMARATE_LYASES"/>
    <property type="match status" value="1"/>
</dbReference>
<protein>
    <recommendedName>
        <fullName evidence="1">Argininosuccinate lyase</fullName>
        <shortName evidence="1">ASAL</shortName>
        <ecNumber evidence="1">4.3.2.1</ecNumber>
    </recommendedName>
    <alternativeName>
        <fullName evidence="1">Arginosuccinase</fullName>
    </alternativeName>
</protein>
<sequence length="456" mass="48944">MALWGGRFQGQASALFQLFNDSLPVDYRLFVQDVEGSIAWADAIASVGILNADECSRLKAALTELLEEVGEDESAIIGSGAEDIHSFVETKLIEKVGDLGKKLHTGRSRNDQVATDLKLWCKASGGLLETKLTAVIQALLALASRELDAVMPGYTHLQRAQPVTFGHWCLAYVEMLERDLSRLADALKRLNTCPLGSGALAGTAYAIDRHELAAALGFGGPTLNSLDSVSDRDHVVELCAAASVSMMHLSRMAEDLIFFNTGEAAFVELADNVTSGSSLMPQKKNPDALELIRGKTGRVYGNLVGILTTMKALPLAYNKDMQEDKEGLFDTLDSWGICLDMAALVLEGVKVNRDNTKQAAQAGYANATELADYLVAKGMPFREAHHVVGEVVLHAISKGQALEALPLASLQSFAAVIGDDVYPHLSLDECLAKRDVLGGTAIKQVTAALAAKQQQY</sequence>
<feature type="chain" id="PRO_1000000534" description="Argininosuccinate lyase">
    <location>
        <begin position="1"/>
        <end position="456"/>
    </location>
</feature>